<feature type="chain" id="PRO_0000367110" description="Actin, cytoplasmic">
    <location>
        <begin position="1"/>
        <end position="375"/>
    </location>
</feature>
<feature type="initiator methionine" description="Removed; alternate" evidence="1">
    <location>
        <position position="1"/>
    </location>
</feature>
<feature type="chain" id="PRO_0000000641" description="Actin, cytoplasmic, N-terminally processed">
    <location>
        <begin position="2"/>
        <end position="375"/>
    </location>
</feature>
<feature type="modified residue" description="N-acetylmethionine; in Actin, cytoplasmic; alternate" evidence="1">
    <location>
        <position position="1"/>
    </location>
</feature>
<feature type="modified residue" description="N-acetylglutamate; in Actin, cytoplasmic, N-terminally processed" evidence="1">
    <location>
        <position position="2"/>
    </location>
</feature>
<evidence type="ECO:0000250" key="1"/>
<evidence type="ECO:0000250" key="2">
    <source>
        <dbReference type="UniProtKB" id="P68137"/>
    </source>
</evidence>
<evidence type="ECO:0000305" key="3"/>
<reference key="1">
    <citation type="journal article" date="1999" name="Gene">
        <title>Genomic organization and evolution of actin genes in the amphioxus Branchiostoma belcheri and Branchiostoma floridae.</title>
        <authorList>
            <person name="Kusakabe R."/>
            <person name="Satoh N."/>
            <person name="Holland L.Z."/>
            <person name="Kusakabe T."/>
        </authorList>
    </citation>
    <scope>NUCLEOTIDE SEQUENCE [MRNA]</scope>
</reference>
<protein>
    <recommendedName>
        <fullName>Actin, cytoplasmic</fullName>
        <ecNumber evidence="2">3.6.4.-</ecNumber>
    </recommendedName>
    <alternativeName>
        <fullName>BbCA1</fullName>
    </alternativeName>
    <component>
        <recommendedName>
            <fullName>Actin, cytoplasmic, N-terminally processed</fullName>
        </recommendedName>
    </component>
</protein>
<keyword id="KW-0007">Acetylation</keyword>
<keyword id="KW-0067">ATP-binding</keyword>
<keyword id="KW-0963">Cytoplasm</keyword>
<keyword id="KW-0206">Cytoskeleton</keyword>
<keyword id="KW-0378">Hydrolase</keyword>
<keyword id="KW-0547">Nucleotide-binding</keyword>
<keyword id="KW-1185">Reference proteome</keyword>
<sequence>MEDDVAALVVDNGSGMCKAGFAGDDAPRAVFPSIVGRPRHQGVMVGMGQKDSYVGDEAQSKRGILTLKYPIEHGIVTNWDDMEKIWHHTFYNELRVAPEEHPVLLTEAPLNPKANREKMTQIMFETFNSPAMYVAIQAVLSLYASGRTTGIVLDSGDGVSHTVPIYEGYALPHAILRLDLAGRDLTDYLMKILTERGYSFTTTAEREIVRDIKEKLCYVALDFEQEMATAASSSSLEKSYELPDGQVITIGNERFRCPESLFQPSFLGMESTGVHETTYNSIMKCDIDIRKDLYANTVLSGGTTMFPGIADRMQKEITALAPSTMKIKIIAPPERKYSVWIGGSILASLSTFQQMWISKQEYDESGPSIVHRKCF</sequence>
<organism>
    <name type="scientific">Branchiostoma belcheri</name>
    <name type="common">Amphioxus</name>
    <dbReference type="NCBI Taxonomy" id="7741"/>
    <lineage>
        <taxon>Eukaryota</taxon>
        <taxon>Metazoa</taxon>
        <taxon>Chordata</taxon>
        <taxon>Cephalochordata</taxon>
        <taxon>Leptocardii</taxon>
        <taxon>Amphioxiformes</taxon>
        <taxon>Branchiostomatidae</taxon>
        <taxon>Branchiostoma</taxon>
    </lineage>
</organism>
<dbReference type="EC" id="3.6.4.-" evidence="2"/>
<dbReference type="EMBL" id="D87738">
    <property type="protein sequence ID" value="BAA13444.1"/>
    <property type="molecule type" value="mRNA"/>
</dbReference>
<dbReference type="SMR" id="Q93129"/>
<dbReference type="Proteomes" id="UP000515135">
    <property type="component" value="Unplaced"/>
</dbReference>
<dbReference type="GO" id="GO:0005737">
    <property type="term" value="C:cytoplasm"/>
    <property type="evidence" value="ECO:0007669"/>
    <property type="project" value="UniProtKB-KW"/>
</dbReference>
<dbReference type="GO" id="GO:0005856">
    <property type="term" value="C:cytoskeleton"/>
    <property type="evidence" value="ECO:0007669"/>
    <property type="project" value="UniProtKB-SubCell"/>
</dbReference>
<dbReference type="GO" id="GO:0005524">
    <property type="term" value="F:ATP binding"/>
    <property type="evidence" value="ECO:0007669"/>
    <property type="project" value="UniProtKB-KW"/>
</dbReference>
<dbReference type="GO" id="GO:0016787">
    <property type="term" value="F:hydrolase activity"/>
    <property type="evidence" value="ECO:0007669"/>
    <property type="project" value="UniProtKB-KW"/>
</dbReference>
<dbReference type="CDD" id="cd10224">
    <property type="entry name" value="ASKHA_NBD_actin"/>
    <property type="match status" value="1"/>
</dbReference>
<dbReference type="FunFam" id="3.30.420.40:FF:000131">
    <property type="entry name" value="Actin, alpha skeletal muscle"/>
    <property type="match status" value="1"/>
</dbReference>
<dbReference type="FunFam" id="3.30.420.40:FF:000291">
    <property type="entry name" value="Actin, alpha skeletal muscle"/>
    <property type="match status" value="1"/>
</dbReference>
<dbReference type="FunFam" id="3.90.640.10:FF:000047">
    <property type="entry name" value="Actin, alpha skeletal muscle"/>
    <property type="match status" value="1"/>
</dbReference>
<dbReference type="FunFam" id="3.30.420.40:FF:000058">
    <property type="entry name" value="Putative actin-related protein 5"/>
    <property type="match status" value="1"/>
</dbReference>
<dbReference type="Gene3D" id="3.30.420.40">
    <property type="match status" value="2"/>
</dbReference>
<dbReference type="Gene3D" id="3.90.640.10">
    <property type="entry name" value="Actin, Chain A, domain 4"/>
    <property type="match status" value="1"/>
</dbReference>
<dbReference type="InterPro" id="IPR004000">
    <property type="entry name" value="Actin"/>
</dbReference>
<dbReference type="InterPro" id="IPR020902">
    <property type="entry name" value="Actin/actin-like_CS"/>
</dbReference>
<dbReference type="InterPro" id="IPR004001">
    <property type="entry name" value="Actin_CS"/>
</dbReference>
<dbReference type="InterPro" id="IPR043129">
    <property type="entry name" value="ATPase_NBD"/>
</dbReference>
<dbReference type="PANTHER" id="PTHR11937">
    <property type="entry name" value="ACTIN"/>
    <property type="match status" value="1"/>
</dbReference>
<dbReference type="Pfam" id="PF00022">
    <property type="entry name" value="Actin"/>
    <property type="match status" value="1"/>
</dbReference>
<dbReference type="PRINTS" id="PR00190">
    <property type="entry name" value="ACTIN"/>
</dbReference>
<dbReference type="SMART" id="SM00268">
    <property type="entry name" value="ACTIN"/>
    <property type="match status" value="1"/>
</dbReference>
<dbReference type="SUPFAM" id="SSF53067">
    <property type="entry name" value="Actin-like ATPase domain"/>
    <property type="match status" value="2"/>
</dbReference>
<dbReference type="PROSITE" id="PS00406">
    <property type="entry name" value="ACTINS_1"/>
    <property type="match status" value="1"/>
</dbReference>
<dbReference type="PROSITE" id="PS00432">
    <property type="entry name" value="ACTINS_2"/>
    <property type="match status" value="1"/>
</dbReference>
<dbReference type="PROSITE" id="PS01132">
    <property type="entry name" value="ACTINS_ACT_LIKE"/>
    <property type="match status" value="1"/>
</dbReference>
<comment type="function">
    <text>Actins are highly conserved proteins that are involved in various types of cell motility and are ubiquitously expressed in all eukaryotic cells.</text>
</comment>
<comment type="catalytic activity">
    <reaction evidence="2">
        <text>ATP + H2O = ADP + phosphate + H(+)</text>
        <dbReference type="Rhea" id="RHEA:13065"/>
        <dbReference type="ChEBI" id="CHEBI:15377"/>
        <dbReference type="ChEBI" id="CHEBI:15378"/>
        <dbReference type="ChEBI" id="CHEBI:30616"/>
        <dbReference type="ChEBI" id="CHEBI:43474"/>
        <dbReference type="ChEBI" id="CHEBI:456216"/>
    </reaction>
</comment>
<comment type="subcellular location">
    <subcellularLocation>
        <location>Cytoplasm</location>
        <location>Cytoskeleton</location>
    </subcellularLocation>
</comment>
<comment type="similarity">
    <text evidence="3">Belongs to the actin family.</text>
</comment>
<accession>Q93129</accession>
<name>ACTC_BRABE</name>
<proteinExistence type="evidence at transcript level"/>